<dbReference type="EC" id="1.1.1.102" evidence="7"/>
<dbReference type="EMBL" id="BC112615">
    <property type="protein sequence ID" value="AAI12616.1"/>
    <property type="molecule type" value="mRNA"/>
</dbReference>
<dbReference type="RefSeq" id="NP_001039384.1">
    <property type="nucleotide sequence ID" value="NM_001045919.1"/>
</dbReference>
<dbReference type="SMR" id="Q2KIJ5"/>
<dbReference type="FunCoup" id="Q2KIJ5">
    <property type="interactions" value="2200"/>
</dbReference>
<dbReference type="STRING" id="9913.ENSBTAP00000010155"/>
<dbReference type="PaxDb" id="9913-ENSBTAP00000010155"/>
<dbReference type="Ensembl" id="ENSBTAT00000010155.5">
    <property type="protein sequence ID" value="ENSBTAP00000010155.5"/>
    <property type="gene ID" value="ENSBTAG00000007723.6"/>
</dbReference>
<dbReference type="GeneID" id="505558"/>
<dbReference type="KEGG" id="bta:505558"/>
<dbReference type="CTD" id="2531"/>
<dbReference type="VEuPathDB" id="HostDB:ENSBTAG00000007723"/>
<dbReference type="VGNC" id="VGNC:30536">
    <property type="gene designation" value="KDSR"/>
</dbReference>
<dbReference type="eggNOG" id="KOG1210">
    <property type="taxonomic scope" value="Eukaryota"/>
</dbReference>
<dbReference type="GeneTree" id="ENSGT00940000156961"/>
<dbReference type="HOGENOM" id="CLU_010194_3_2_1"/>
<dbReference type="InParanoid" id="Q2KIJ5"/>
<dbReference type="OMA" id="ICGVFEE"/>
<dbReference type="OrthoDB" id="37659at2759"/>
<dbReference type="TreeFam" id="TF105430"/>
<dbReference type="BRENDA" id="1.1.1.102">
    <property type="organism ID" value="908"/>
</dbReference>
<dbReference type="Reactome" id="R-BTA-1660661">
    <property type="pathway name" value="Sphingolipid de novo biosynthesis"/>
</dbReference>
<dbReference type="UniPathway" id="UPA00222"/>
<dbReference type="Proteomes" id="UP000009136">
    <property type="component" value="Chromosome 24"/>
</dbReference>
<dbReference type="Bgee" id="ENSBTAG00000007723">
    <property type="expression patterns" value="Expressed in omental fat pad and 107 other cell types or tissues"/>
</dbReference>
<dbReference type="GO" id="GO:0005789">
    <property type="term" value="C:endoplasmic reticulum membrane"/>
    <property type="evidence" value="ECO:0000318"/>
    <property type="project" value="GO_Central"/>
</dbReference>
<dbReference type="GO" id="GO:0047560">
    <property type="term" value="F:3-dehydrosphinganine reductase activity"/>
    <property type="evidence" value="ECO:0000314"/>
    <property type="project" value="UniProtKB"/>
</dbReference>
<dbReference type="GO" id="GO:0070402">
    <property type="term" value="F:NADPH binding"/>
    <property type="evidence" value="ECO:0000250"/>
    <property type="project" value="UniProtKB"/>
</dbReference>
<dbReference type="GO" id="GO:0006666">
    <property type="term" value="P:3-keto-sphinganine metabolic process"/>
    <property type="evidence" value="ECO:0000314"/>
    <property type="project" value="UniProtKB"/>
</dbReference>
<dbReference type="GO" id="GO:0030148">
    <property type="term" value="P:sphingolipid biosynthetic process"/>
    <property type="evidence" value="ECO:0000314"/>
    <property type="project" value="UniProtKB"/>
</dbReference>
<dbReference type="CDD" id="cd08939">
    <property type="entry name" value="KDSR-like_SDR_c"/>
    <property type="match status" value="1"/>
</dbReference>
<dbReference type="FunFam" id="3.40.50.720:FF:000165">
    <property type="entry name" value="3-ketodihydrosphingosine reductase"/>
    <property type="match status" value="1"/>
</dbReference>
<dbReference type="Gene3D" id="3.40.50.720">
    <property type="entry name" value="NAD(P)-binding Rossmann-like Domain"/>
    <property type="match status" value="1"/>
</dbReference>
<dbReference type="InterPro" id="IPR045022">
    <property type="entry name" value="KDSR-like"/>
</dbReference>
<dbReference type="InterPro" id="IPR036291">
    <property type="entry name" value="NAD(P)-bd_dom_sf"/>
</dbReference>
<dbReference type="InterPro" id="IPR020904">
    <property type="entry name" value="Sc_DH/Rdtase_CS"/>
</dbReference>
<dbReference type="InterPro" id="IPR002347">
    <property type="entry name" value="SDR_fam"/>
</dbReference>
<dbReference type="PANTHER" id="PTHR43550">
    <property type="entry name" value="3-KETODIHYDROSPHINGOSINE REDUCTASE"/>
    <property type="match status" value="1"/>
</dbReference>
<dbReference type="PANTHER" id="PTHR43550:SF3">
    <property type="entry name" value="3-KETODIHYDROSPHINGOSINE REDUCTASE"/>
    <property type="match status" value="1"/>
</dbReference>
<dbReference type="Pfam" id="PF00106">
    <property type="entry name" value="adh_short"/>
    <property type="match status" value="1"/>
</dbReference>
<dbReference type="PRINTS" id="PR00081">
    <property type="entry name" value="GDHRDH"/>
</dbReference>
<dbReference type="PRINTS" id="PR00080">
    <property type="entry name" value="SDRFAMILY"/>
</dbReference>
<dbReference type="SUPFAM" id="SSF51735">
    <property type="entry name" value="NAD(P)-binding Rossmann-fold domains"/>
    <property type="match status" value="1"/>
</dbReference>
<dbReference type="PROSITE" id="PS00061">
    <property type="entry name" value="ADH_SHORT"/>
    <property type="match status" value="1"/>
</dbReference>
<keyword id="KW-0256">Endoplasmic reticulum</keyword>
<keyword id="KW-0443">Lipid metabolism</keyword>
<keyword id="KW-0472">Membrane</keyword>
<keyword id="KW-0521">NADP</keyword>
<keyword id="KW-0547">Nucleotide-binding</keyword>
<keyword id="KW-0560">Oxidoreductase</keyword>
<keyword id="KW-0656">Proto-oncogene</keyword>
<keyword id="KW-1185">Reference proteome</keyword>
<keyword id="KW-0732">Signal</keyword>
<keyword id="KW-0746">Sphingolipid metabolism</keyword>
<keyword id="KW-0812">Transmembrane</keyword>
<keyword id="KW-1133">Transmembrane helix</keyword>
<protein>
    <recommendedName>
        <fullName>3-ketodihydrosphingosine reductase</fullName>
        <shortName>KDS reductase</shortName>
        <ecNumber evidence="7">1.1.1.102</ecNumber>
    </recommendedName>
    <alternativeName>
        <fullName>3-dehydrosphinganine reductase</fullName>
    </alternativeName>
    <alternativeName>
        <fullName>Follicular variant translocation protein 1 homolog</fullName>
        <shortName>FVT-1</shortName>
    </alternativeName>
</protein>
<name>KDSR_BOVIN</name>
<evidence type="ECO:0000250" key="1">
    <source>
        <dbReference type="UniProtKB" id="O93868"/>
    </source>
</evidence>
<evidence type="ECO:0000250" key="2">
    <source>
        <dbReference type="UniProtKB" id="P0CR36"/>
    </source>
</evidence>
<evidence type="ECO:0000250" key="3">
    <source>
        <dbReference type="UniProtKB" id="P40471"/>
    </source>
</evidence>
<evidence type="ECO:0000250" key="4">
    <source>
        <dbReference type="UniProtKB" id="Q06136"/>
    </source>
</evidence>
<evidence type="ECO:0000255" key="5"/>
<evidence type="ECO:0000255" key="6">
    <source>
        <dbReference type="PROSITE-ProRule" id="PRU10001"/>
    </source>
</evidence>
<evidence type="ECO:0000269" key="7">
    <source>
    </source>
</evidence>
<evidence type="ECO:0000305" key="8"/>
<evidence type="ECO:0000312" key="9">
    <source>
        <dbReference type="EMBL" id="AAI12616.1"/>
    </source>
</evidence>
<evidence type="ECO:0000312" key="10">
    <source>
        <dbReference type="Proteomes" id="UP000009136"/>
    </source>
</evidence>
<comment type="function">
    <text evidence="7">Catalyzes the reduction of 3'-oxosphinganine (3-ketodihydrosphingosine/KDS) to sphinganine (dihydrosphingosine/DHS), the second step of de novo sphingolipid biosynthesis.</text>
</comment>
<comment type="catalytic activity">
    <reaction evidence="7">
        <text>sphinganine + NADP(+) = 3-oxosphinganine + NADPH + H(+)</text>
        <dbReference type="Rhea" id="RHEA:22640"/>
        <dbReference type="ChEBI" id="CHEBI:15378"/>
        <dbReference type="ChEBI" id="CHEBI:57783"/>
        <dbReference type="ChEBI" id="CHEBI:57817"/>
        <dbReference type="ChEBI" id="CHEBI:58299"/>
        <dbReference type="ChEBI" id="CHEBI:58349"/>
        <dbReference type="EC" id="1.1.1.102"/>
    </reaction>
    <physiologicalReaction direction="right-to-left" evidence="7">
        <dbReference type="Rhea" id="RHEA:22642"/>
    </physiologicalReaction>
</comment>
<comment type="pathway">
    <text>Lipid metabolism; sphingolipid metabolism.</text>
</comment>
<comment type="subcellular location">
    <subcellularLocation>
        <location evidence="4">Endoplasmic reticulum membrane</location>
        <topology evidence="5">Multi-pass membrane protein</topology>
    </subcellularLocation>
</comment>
<comment type="disease">
    <text evidence="7">Defects in KDSR may be the cause of a bovine form of spinal muscular dystrophy.</text>
</comment>
<comment type="similarity">
    <text evidence="8">Belongs to the short-chain dehydrogenases/reductases (SDR) family.</text>
</comment>
<proteinExistence type="evidence at protein level"/>
<sequence>MLLLAAASLVAFVLLLYMVSPLISPKPLALPGAHVVVTGGSSGIGKCIAIECYKQGAFITLVARNEDKLLQAKKEIEKHSINDKQVVLCISVDVSQDYSQVENVIKQAQEKLGPVDMLVNCAGMSLSGKFEDLEVSTFERLMSINYLGSVYPSRAVIATMKERRMGRVVFVSSQAGQLGLFGYTAYSSSKFALRGLAEALQMEVKPYNVYVTVAYPPDTDTPGFAKENQTKPLETRLISETTSVCKPEQVAKQIVKDAVQGNFNSSIGSDGYMLSSLTCGMAPVTSIMEGLQQVVTMGLFRTIALFYLGSFDSIVRRCMMQKAKLETVDKTA</sequence>
<reference evidence="9" key="1">
    <citation type="submission" date="2006-01" db="EMBL/GenBank/DDBJ databases">
        <authorList>
            <consortium name="NIH - Mammalian Gene Collection (MGC) project"/>
        </authorList>
    </citation>
    <scope>NUCLEOTIDE SEQUENCE [LARGE SCALE MRNA]</scope>
    <source>
        <strain>Hereford</strain>
        <tissue>Testis</tissue>
    </source>
</reference>
<reference evidence="10" key="2">
    <citation type="submission" date="2018-03" db="EMBL/GenBank/DDBJ databases">
        <title>ARS-UCD1.2.</title>
        <authorList>
            <person name="Rosen B.D."/>
            <person name="Bickhart D.M."/>
            <person name="Koren S."/>
            <person name="Schnabel R.D."/>
            <person name="Hall R."/>
            <person name="Zimin A."/>
            <person name="Dreischer C."/>
            <person name="Schultheiss S."/>
            <person name="Schroeder S.G."/>
            <person name="Elsik C.G."/>
            <person name="Couldrey C."/>
            <person name="Liu G.E."/>
            <person name="Van Tassell C.P."/>
            <person name="Phillippy A.M."/>
            <person name="Smith T.P.L."/>
            <person name="Medrano J.F."/>
        </authorList>
    </citation>
    <scope>NUCLEOTIDE SEQUENCE [LARGE SCALE GENOMIC DNA]</scope>
    <source>
        <strain evidence="10">Hereford</strain>
    </source>
</reference>
<reference key="3">
    <citation type="journal article" date="2007" name="Proc. Natl. Acad. Sci. U.S.A.">
        <title>A missense mutation in the 3-ketodihydrosphingosine reductase FVT1 as candidate causal mutation for bovine spinal muscular atrophy.</title>
        <authorList>
            <person name="Krebs S."/>
            <person name="Medugorac I."/>
            <person name="Roether S."/>
            <person name="Straesser K."/>
            <person name="Foerster M."/>
        </authorList>
    </citation>
    <scope>CHARACTERIZATION OF VARIANT THR-175</scope>
    <scope>FUNCTION</scope>
    <scope>CATALYTIC ACTIVITY</scope>
    <scope>INVOLVEMENT IN A BOVINE FORM OF SPINAL MUSCULAR DYSTROPHY</scope>
</reference>
<organism>
    <name type="scientific">Bos taurus</name>
    <name type="common">Bovine</name>
    <dbReference type="NCBI Taxonomy" id="9913"/>
    <lineage>
        <taxon>Eukaryota</taxon>
        <taxon>Metazoa</taxon>
        <taxon>Chordata</taxon>
        <taxon>Craniata</taxon>
        <taxon>Vertebrata</taxon>
        <taxon>Euteleostomi</taxon>
        <taxon>Mammalia</taxon>
        <taxon>Eutheria</taxon>
        <taxon>Laurasiatheria</taxon>
        <taxon>Artiodactyla</taxon>
        <taxon>Ruminantia</taxon>
        <taxon>Pecora</taxon>
        <taxon>Bovidae</taxon>
        <taxon>Bovinae</taxon>
        <taxon>Bos</taxon>
    </lineage>
</organism>
<gene>
    <name type="primary">KDSR</name>
    <name type="synonym">FVT1</name>
</gene>
<feature type="signal peptide" evidence="5">
    <location>
        <begin position="1"/>
        <end position="25"/>
    </location>
</feature>
<feature type="chain" id="PRO_0000331448" description="3-ketodihydrosphingosine reductase">
    <location>
        <begin position="26"/>
        <end position="332"/>
    </location>
</feature>
<feature type="topological domain" description="Cytoplasmic" evidence="5">
    <location>
        <begin position="26"/>
        <end position="269"/>
    </location>
</feature>
<feature type="transmembrane region" description="Helical" evidence="5">
    <location>
        <begin position="270"/>
        <end position="290"/>
    </location>
</feature>
<feature type="topological domain" description="Lumenal" evidence="5">
    <location>
        <begin position="291"/>
        <end position="292"/>
    </location>
</feature>
<feature type="transmembrane region" description="Helical" evidence="5">
    <location>
        <begin position="293"/>
        <end position="313"/>
    </location>
</feature>
<feature type="topological domain" description="Cytoplasmic" evidence="5">
    <location>
        <begin position="314"/>
        <end position="331"/>
    </location>
</feature>
<feature type="short sequence motif" description="GXSXG" evidence="3">
    <location>
        <begin position="39"/>
        <end position="43"/>
    </location>
</feature>
<feature type="active site" description="Proton donor" evidence="1">
    <location>
        <position position="172"/>
    </location>
</feature>
<feature type="active site" description="Proton acceptor" evidence="6">
    <location>
        <position position="186"/>
    </location>
</feature>
<feature type="active site" description="Lowers pKa of active site Tyr" evidence="1">
    <location>
        <position position="190"/>
    </location>
</feature>
<feature type="binding site" evidence="2">
    <location>
        <position position="39"/>
    </location>
    <ligand>
        <name>NADPH</name>
        <dbReference type="ChEBI" id="CHEBI:57783"/>
    </ligand>
</feature>
<feature type="binding site" evidence="2">
    <location>
        <position position="41"/>
    </location>
    <ligand>
        <name>NADPH</name>
        <dbReference type="ChEBI" id="CHEBI:57783"/>
    </ligand>
</feature>
<feature type="binding site" evidence="2">
    <location>
        <position position="42"/>
    </location>
    <ligand>
        <name>NADPH</name>
        <dbReference type="ChEBI" id="CHEBI:57783"/>
    </ligand>
</feature>
<feature type="binding site" evidence="2">
    <location>
        <position position="43"/>
    </location>
    <ligand>
        <name>NADPH</name>
        <dbReference type="ChEBI" id="CHEBI:57783"/>
    </ligand>
</feature>
<feature type="binding site" evidence="2">
    <location>
        <position position="64"/>
    </location>
    <ligand>
        <name>NADPH</name>
        <dbReference type="ChEBI" id="CHEBI:57783"/>
    </ligand>
</feature>
<feature type="binding site" evidence="2">
    <location>
        <position position="68"/>
    </location>
    <ligand>
        <name>NADPH</name>
        <dbReference type="ChEBI" id="CHEBI:57783"/>
    </ligand>
</feature>
<feature type="binding site" evidence="2">
    <location>
        <position position="93"/>
    </location>
    <ligand>
        <name>NADPH</name>
        <dbReference type="ChEBI" id="CHEBI:57783"/>
    </ligand>
</feature>
<feature type="binding site" evidence="1">
    <location>
        <position position="186"/>
    </location>
    <ligand>
        <name>NADP(+)</name>
        <dbReference type="ChEBI" id="CHEBI:58349"/>
    </ligand>
</feature>
<feature type="binding site" evidence="1">
    <location>
        <position position="190"/>
    </location>
    <ligand>
        <name>NADP(+)</name>
        <dbReference type="ChEBI" id="CHEBI:58349"/>
    </ligand>
</feature>
<feature type="sequence variant" description="Found in cattle affected by a bovine form of spinal muscular dystrophy; impairs activity; partially complements a yeast knockout mutant." evidence="7">
    <original>A</original>
    <variation>T</variation>
    <location>
        <position position="175"/>
    </location>
</feature>
<feature type="sequence conflict" description="In Ref. 1; AAI12616." evidence="8" ref="1">
    <location>
        <position position="258"/>
    </location>
</feature>
<accession>Q2KIJ5</accession>
<accession>F1MLE5</accession>